<protein>
    <recommendedName>
        <fullName evidence="1">Carbamoyl phosphate synthase large chain</fullName>
        <ecNumber evidence="1">6.3.4.16</ecNumber>
        <ecNumber evidence="1">6.3.5.5</ecNumber>
    </recommendedName>
    <alternativeName>
        <fullName evidence="1">Carbamoyl phosphate synthetase ammonia chain</fullName>
    </alternativeName>
</protein>
<accession>Q1D6Y8</accession>
<comment type="function">
    <text evidence="1">Large subunit of the glutamine-dependent carbamoyl phosphate synthetase (CPSase). CPSase catalyzes the formation of carbamoyl phosphate from the ammonia moiety of glutamine, carbonate, and phosphate donated by ATP, constituting the first step of 2 biosynthetic pathways, one leading to arginine and/or urea and the other to pyrimidine nucleotides. The large subunit (synthetase) binds the substrates ammonia (free or transferred from glutamine from the small subunit), hydrogencarbonate and ATP and carries out an ATP-coupled ligase reaction, activating hydrogencarbonate by forming carboxy phosphate which reacts with ammonia to form carbamoyl phosphate.</text>
</comment>
<comment type="catalytic activity">
    <reaction evidence="1">
        <text>hydrogencarbonate + L-glutamine + 2 ATP + H2O = carbamoyl phosphate + L-glutamate + 2 ADP + phosphate + 2 H(+)</text>
        <dbReference type="Rhea" id="RHEA:18633"/>
        <dbReference type="ChEBI" id="CHEBI:15377"/>
        <dbReference type="ChEBI" id="CHEBI:15378"/>
        <dbReference type="ChEBI" id="CHEBI:17544"/>
        <dbReference type="ChEBI" id="CHEBI:29985"/>
        <dbReference type="ChEBI" id="CHEBI:30616"/>
        <dbReference type="ChEBI" id="CHEBI:43474"/>
        <dbReference type="ChEBI" id="CHEBI:58228"/>
        <dbReference type="ChEBI" id="CHEBI:58359"/>
        <dbReference type="ChEBI" id="CHEBI:456216"/>
        <dbReference type="EC" id="6.3.5.5"/>
    </reaction>
</comment>
<comment type="catalytic activity">
    <molecule>Carbamoyl phosphate synthase large chain</molecule>
    <reaction evidence="1">
        <text>hydrogencarbonate + NH4(+) + 2 ATP = carbamoyl phosphate + 2 ADP + phosphate + 2 H(+)</text>
        <dbReference type="Rhea" id="RHEA:18029"/>
        <dbReference type="ChEBI" id="CHEBI:15378"/>
        <dbReference type="ChEBI" id="CHEBI:17544"/>
        <dbReference type="ChEBI" id="CHEBI:28938"/>
        <dbReference type="ChEBI" id="CHEBI:30616"/>
        <dbReference type="ChEBI" id="CHEBI:43474"/>
        <dbReference type="ChEBI" id="CHEBI:58228"/>
        <dbReference type="ChEBI" id="CHEBI:456216"/>
        <dbReference type="EC" id="6.3.4.16"/>
    </reaction>
</comment>
<comment type="cofactor">
    <cofactor evidence="1">
        <name>Mg(2+)</name>
        <dbReference type="ChEBI" id="CHEBI:18420"/>
    </cofactor>
    <cofactor evidence="1">
        <name>Mn(2+)</name>
        <dbReference type="ChEBI" id="CHEBI:29035"/>
    </cofactor>
    <text evidence="1">Binds 4 Mg(2+) or Mn(2+) ions per subunit.</text>
</comment>
<comment type="pathway">
    <text evidence="1">Amino-acid biosynthesis; L-arginine biosynthesis; carbamoyl phosphate from bicarbonate: step 1/1.</text>
</comment>
<comment type="pathway">
    <text evidence="1">Pyrimidine metabolism; UMP biosynthesis via de novo pathway; (S)-dihydroorotate from bicarbonate: step 1/3.</text>
</comment>
<comment type="subunit">
    <text evidence="1">Composed of two chains; the small (or glutamine) chain promotes the hydrolysis of glutamine to ammonia, which is used by the large (or ammonia) chain to synthesize carbamoyl phosphate. Tetramer of heterodimers (alpha,beta)4.</text>
</comment>
<comment type="domain">
    <text evidence="1">The large subunit is composed of 2 ATP-grasp domains that are involved in binding the 2 ATP molecules needed for carbamoyl phosphate synthesis. The N-terminal ATP-grasp domain (referred to as the carboxyphosphate synthetic component) catalyzes the ATP-dependent phosphorylation of hydrogencarbonate to carboxyphosphate and the subsequent nucleophilic attack by ammonia to form a carbamate intermediate. The C-terminal ATP-grasp domain (referred to as the carbamoyl phosphate synthetic component) then catalyzes the phosphorylation of carbamate with the second ATP to form the end product carbamoyl phosphate. The reactive and unstable enzyme intermediates are sequentially channeled from one active site to the next through the interior of the protein over a distance of at least 96 A.</text>
</comment>
<comment type="similarity">
    <text evidence="1">Belongs to the CarB family.</text>
</comment>
<reference key="1">
    <citation type="journal article" date="2006" name="Proc. Natl. Acad. Sci. U.S.A.">
        <title>Evolution of sensory complexity recorded in a myxobacterial genome.</title>
        <authorList>
            <person name="Goldman B.S."/>
            <person name="Nierman W.C."/>
            <person name="Kaiser D."/>
            <person name="Slater S.C."/>
            <person name="Durkin A.S."/>
            <person name="Eisen J.A."/>
            <person name="Ronning C.M."/>
            <person name="Barbazuk W.B."/>
            <person name="Blanchard M."/>
            <person name="Field C."/>
            <person name="Halling C."/>
            <person name="Hinkle G."/>
            <person name="Iartchuk O."/>
            <person name="Kim H.S."/>
            <person name="Mackenzie C."/>
            <person name="Madupu R."/>
            <person name="Miller N."/>
            <person name="Shvartsbeyn A."/>
            <person name="Sullivan S.A."/>
            <person name="Vaudin M."/>
            <person name="Wiegand R."/>
            <person name="Kaplan H.B."/>
        </authorList>
    </citation>
    <scope>NUCLEOTIDE SEQUENCE [LARGE SCALE GENOMIC DNA]</scope>
    <source>
        <strain>DK1622</strain>
    </source>
</reference>
<feature type="chain" id="PRO_1000066373" description="Carbamoyl phosphate synthase large chain">
    <location>
        <begin position="1"/>
        <end position="1083"/>
    </location>
</feature>
<feature type="domain" description="ATP-grasp 1" evidence="1">
    <location>
        <begin position="133"/>
        <end position="328"/>
    </location>
</feature>
<feature type="domain" description="ATP-grasp 2" evidence="1">
    <location>
        <begin position="679"/>
        <end position="871"/>
    </location>
</feature>
<feature type="domain" description="MGS-like" evidence="1">
    <location>
        <begin position="938"/>
        <end position="1078"/>
    </location>
</feature>
<feature type="region of interest" description="Carboxyphosphate synthetic domain" evidence="1">
    <location>
        <begin position="1"/>
        <end position="402"/>
    </location>
</feature>
<feature type="region of interest" description="Oligomerization domain" evidence="1">
    <location>
        <begin position="403"/>
        <end position="554"/>
    </location>
</feature>
<feature type="region of interest" description="Carbamoyl phosphate synthetic domain" evidence="1">
    <location>
        <begin position="555"/>
        <end position="937"/>
    </location>
</feature>
<feature type="region of interest" description="Allosteric domain" evidence="1">
    <location>
        <begin position="938"/>
        <end position="1083"/>
    </location>
</feature>
<feature type="binding site" evidence="1">
    <location>
        <position position="129"/>
    </location>
    <ligand>
        <name>ATP</name>
        <dbReference type="ChEBI" id="CHEBI:30616"/>
        <label>1</label>
    </ligand>
</feature>
<feature type="binding site" evidence="1">
    <location>
        <position position="169"/>
    </location>
    <ligand>
        <name>ATP</name>
        <dbReference type="ChEBI" id="CHEBI:30616"/>
        <label>1</label>
    </ligand>
</feature>
<feature type="binding site" evidence="1">
    <location>
        <position position="175"/>
    </location>
    <ligand>
        <name>ATP</name>
        <dbReference type="ChEBI" id="CHEBI:30616"/>
        <label>1</label>
    </ligand>
</feature>
<feature type="binding site" evidence="1">
    <location>
        <position position="176"/>
    </location>
    <ligand>
        <name>ATP</name>
        <dbReference type="ChEBI" id="CHEBI:30616"/>
        <label>1</label>
    </ligand>
</feature>
<feature type="binding site" evidence="1">
    <location>
        <position position="208"/>
    </location>
    <ligand>
        <name>ATP</name>
        <dbReference type="ChEBI" id="CHEBI:30616"/>
        <label>1</label>
    </ligand>
</feature>
<feature type="binding site" evidence="1">
    <location>
        <position position="210"/>
    </location>
    <ligand>
        <name>ATP</name>
        <dbReference type="ChEBI" id="CHEBI:30616"/>
        <label>1</label>
    </ligand>
</feature>
<feature type="binding site" evidence="1">
    <location>
        <position position="215"/>
    </location>
    <ligand>
        <name>ATP</name>
        <dbReference type="ChEBI" id="CHEBI:30616"/>
        <label>1</label>
    </ligand>
</feature>
<feature type="binding site" evidence="1">
    <location>
        <position position="241"/>
    </location>
    <ligand>
        <name>ATP</name>
        <dbReference type="ChEBI" id="CHEBI:30616"/>
        <label>1</label>
    </ligand>
</feature>
<feature type="binding site" evidence="1">
    <location>
        <position position="242"/>
    </location>
    <ligand>
        <name>ATP</name>
        <dbReference type="ChEBI" id="CHEBI:30616"/>
        <label>1</label>
    </ligand>
</feature>
<feature type="binding site" evidence="1">
    <location>
        <position position="243"/>
    </location>
    <ligand>
        <name>ATP</name>
        <dbReference type="ChEBI" id="CHEBI:30616"/>
        <label>1</label>
    </ligand>
</feature>
<feature type="binding site" evidence="1">
    <location>
        <position position="285"/>
    </location>
    <ligand>
        <name>ATP</name>
        <dbReference type="ChEBI" id="CHEBI:30616"/>
        <label>1</label>
    </ligand>
</feature>
<feature type="binding site" evidence="1">
    <location>
        <position position="285"/>
    </location>
    <ligand>
        <name>Mg(2+)</name>
        <dbReference type="ChEBI" id="CHEBI:18420"/>
        <label>1</label>
    </ligand>
</feature>
<feature type="binding site" evidence="1">
    <location>
        <position position="285"/>
    </location>
    <ligand>
        <name>Mn(2+)</name>
        <dbReference type="ChEBI" id="CHEBI:29035"/>
        <label>1</label>
    </ligand>
</feature>
<feature type="binding site" evidence="1">
    <location>
        <position position="299"/>
    </location>
    <ligand>
        <name>ATP</name>
        <dbReference type="ChEBI" id="CHEBI:30616"/>
        <label>1</label>
    </ligand>
</feature>
<feature type="binding site" evidence="1">
    <location>
        <position position="299"/>
    </location>
    <ligand>
        <name>Mg(2+)</name>
        <dbReference type="ChEBI" id="CHEBI:18420"/>
        <label>1</label>
    </ligand>
</feature>
<feature type="binding site" evidence="1">
    <location>
        <position position="299"/>
    </location>
    <ligand>
        <name>Mg(2+)</name>
        <dbReference type="ChEBI" id="CHEBI:18420"/>
        <label>2</label>
    </ligand>
</feature>
<feature type="binding site" evidence="1">
    <location>
        <position position="299"/>
    </location>
    <ligand>
        <name>Mn(2+)</name>
        <dbReference type="ChEBI" id="CHEBI:29035"/>
        <label>1</label>
    </ligand>
</feature>
<feature type="binding site" evidence="1">
    <location>
        <position position="299"/>
    </location>
    <ligand>
        <name>Mn(2+)</name>
        <dbReference type="ChEBI" id="CHEBI:29035"/>
        <label>2</label>
    </ligand>
</feature>
<feature type="binding site" evidence="1">
    <location>
        <position position="301"/>
    </location>
    <ligand>
        <name>Mg(2+)</name>
        <dbReference type="ChEBI" id="CHEBI:18420"/>
        <label>2</label>
    </ligand>
</feature>
<feature type="binding site" evidence="1">
    <location>
        <position position="301"/>
    </location>
    <ligand>
        <name>Mn(2+)</name>
        <dbReference type="ChEBI" id="CHEBI:29035"/>
        <label>2</label>
    </ligand>
</feature>
<feature type="binding site" evidence="1">
    <location>
        <position position="715"/>
    </location>
    <ligand>
        <name>ATP</name>
        <dbReference type="ChEBI" id="CHEBI:30616"/>
        <label>2</label>
    </ligand>
</feature>
<feature type="binding site" evidence="1">
    <location>
        <position position="754"/>
    </location>
    <ligand>
        <name>ATP</name>
        <dbReference type="ChEBI" id="CHEBI:30616"/>
        <label>2</label>
    </ligand>
</feature>
<feature type="binding site" evidence="1">
    <location>
        <position position="756"/>
    </location>
    <ligand>
        <name>ATP</name>
        <dbReference type="ChEBI" id="CHEBI:30616"/>
        <label>2</label>
    </ligand>
</feature>
<feature type="binding site" evidence="1">
    <location>
        <position position="761"/>
    </location>
    <ligand>
        <name>ATP</name>
        <dbReference type="ChEBI" id="CHEBI:30616"/>
        <label>2</label>
    </ligand>
</feature>
<feature type="binding site" evidence="1">
    <location>
        <position position="787"/>
    </location>
    <ligand>
        <name>ATP</name>
        <dbReference type="ChEBI" id="CHEBI:30616"/>
        <label>2</label>
    </ligand>
</feature>
<feature type="binding site" evidence="1">
    <location>
        <position position="788"/>
    </location>
    <ligand>
        <name>ATP</name>
        <dbReference type="ChEBI" id="CHEBI:30616"/>
        <label>2</label>
    </ligand>
</feature>
<feature type="binding site" evidence="1">
    <location>
        <position position="789"/>
    </location>
    <ligand>
        <name>ATP</name>
        <dbReference type="ChEBI" id="CHEBI:30616"/>
        <label>2</label>
    </ligand>
</feature>
<feature type="binding site" evidence="1">
    <location>
        <position position="790"/>
    </location>
    <ligand>
        <name>ATP</name>
        <dbReference type="ChEBI" id="CHEBI:30616"/>
        <label>2</label>
    </ligand>
</feature>
<feature type="binding site" evidence="1">
    <location>
        <position position="830"/>
    </location>
    <ligand>
        <name>ATP</name>
        <dbReference type="ChEBI" id="CHEBI:30616"/>
        <label>2</label>
    </ligand>
</feature>
<feature type="binding site" evidence="1">
    <location>
        <position position="830"/>
    </location>
    <ligand>
        <name>Mg(2+)</name>
        <dbReference type="ChEBI" id="CHEBI:18420"/>
        <label>3</label>
    </ligand>
</feature>
<feature type="binding site" evidence="1">
    <location>
        <position position="830"/>
    </location>
    <ligand>
        <name>Mn(2+)</name>
        <dbReference type="ChEBI" id="CHEBI:29035"/>
        <label>3</label>
    </ligand>
</feature>
<feature type="binding site" evidence="1">
    <location>
        <position position="842"/>
    </location>
    <ligand>
        <name>ATP</name>
        <dbReference type="ChEBI" id="CHEBI:30616"/>
        <label>2</label>
    </ligand>
</feature>
<feature type="binding site" evidence="1">
    <location>
        <position position="842"/>
    </location>
    <ligand>
        <name>Mg(2+)</name>
        <dbReference type="ChEBI" id="CHEBI:18420"/>
        <label>3</label>
    </ligand>
</feature>
<feature type="binding site" evidence="1">
    <location>
        <position position="842"/>
    </location>
    <ligand>
        <name>Mg(2+)</name>
        <dbReference type="ChEBI" id="CHEBI:18420"/>
        <label>4</label>
    </ligand>
</feature>
<feature type="binding site" evidence="1">
    <location>
        <position position="842"/>
    </location>
    <ligand>
        <name>Mn(2+)</name>
        <dbReference type="ChEBI" id="CHEBI:29035"/>
        <label>3</label>
    </ligand>
</feature>
<feature type="binding site" evidence="1">
    <location>
        <position position="842"/>
    </location>
    <ligand>
        <name>Mn(2+)</name>
        <dbReference type="ChEBI" id="CHEBI:29035"/>
        <label>4</label>
    </ligand>
</feature>
<feature type="binding site" evidence="1">
    <location>
        <position position="844"/>
    </location>
    <ligand>
        <name>Mg(2+)</name>
        <dbReference type="ChEBI" id="CHEBI:18420"/>
        <label>4</label>
    </ligand>
</feature>
<feature type="binding site" evidence="1">
    <location>
        <position position="844"/>
    </location>
    <ligand>
        <name>Mn(2+)</name>
        <dbReference type="ChEBI" id="CHEBI:29035"/>
        <label>4</label>
    </ligand>
</feature>
<sequence length="1083" mass="118757">MPKRTDIRKVLVIGSGPIVIGQAVEFDYSGTQAIKALRDEGVEVVLLNSNPATVMTDPEFAHRTYIEPITVEAAERILASERPDSLLPTMGGQTALNLAKALAEQGILEKYGVRLIGASLDAINKAEDRQLFKAAMQKIGVALPKSGYATTLDQAMSLVEDIGFPAIIRPSFTLGGTGGGIAYNREEFETICRSGLKASPTTTILVEESVLGWKEYELEVVRDTADNVIIVCSIENLDPMGVHTGDSITVAPAQTLTDREYQRMRQASLAIIREIGVETGGSNIQFGINPKDGRMVVIEMNPRVSRSSALASKATGYPIAKIAAKLALGYTLDELRNDITRDTPASFEPTLDYVVVKVPRFNFEKFPHADRTLTTSMRSVGEVMAIGRTFPEAYMKALRSMELGRVGLESPELPAEKEEREKVLREALRIPRPERPWFVAQAFREGMTVEDVHALSAIDPWFLRYIQMLVNEAQSLQEYGRLDQLPDEVLRQAKAHGFSDKYLGRLLGYPAEEVRAHRHARNIRPVYKRVDTCAAEFEAYTPYLYSTYEEEDEAPPTDRQKVLILGSGPIRIGQGIEFDYACVHAAFALREAGYETVMVNCNPETVSTDYDTSDRLYFEPLTIEDVLEVSQREKPVGAIVQFGGQTPLRISVPLEKAGLPILGTSPDAIDRAEDRERFAALIEKLGLKQPENGVARSHAEAFKVAERIGYPVMVRPSYVLGGRAMETVYDVASLERYMREAVSASPEHPVLIDRFLKEAIEVDLDLVADRTGAVMIGGVLEHIQEAGVHSGDAAATLPPHSLSPDLVERMKDQAIALARELGVVGLMNVQFAIQGKTIYILEVNPRASRTVPFISKATGVAMAKIAALCMVGKTLKELGVTQEPEFKHVAVKESVFPFARFAGVDVILGPEMKSTGEVMGLANDYASAFAKSQLAAGVKLPKSGKVFISVKDDDKPAVVDLARRLRSMGFSLVVTSGTHTYLATKGIEAQVVQKVTEGRPNIVDKIVDGEIVLVINTTFGKQEIADSFSIRRESLMHSVPYYTTVQAARMAVGALESLKCTELEVKPLQEYLGINAAPPGTRR</sequence>
<dbReference type="EC" id="6.3.4.16" evidence="1"/>
<dbReference type="EC" id="6.3.5.5" evidence="1"/>
<dbReference type="EMBL" id="CP000113">
    <property type="protein sequence ID" value="ABF92803.1"/>
    <property type="molecule type" value="Genomic_DNA"/>
</dbReference>
<dbReference type="RefSeq" id="WP_011553421.1">
    <property type="nucleotide sequence ID" value="NC_008095.1"/>
</dbReference>
<dbReference type="SMR" id="Q1D6Y8"/>
<dbReference type="STRING" id="246197.MXAN_3388"/>
<dbReference type="EnsemblBacteria" id="ABF92803">
    <property type="protein sequence ID" value="ABF92803"/>
    <property type="gene ID" value="MXAN_3388"/>
</dbReference>
<dbReference type="GeneID" id="41360735"/>
<dbReference type="KEGG" id="mxa:MXAN_3388"/>
<dbReference type="eggNOG" id="COG0458">
    <property type="taxonomic scope" value="Bacteria"/>
</dbReference>
<dbReference type="HOGENOM" id="CLU_000513_1_0_7"/>
<dbReference type="OrthoDB" id="9804197at2"/>
<dbReference type="UniPathway" id="UPA00068">
    <property type="reaction ID" value="UER00171"/>
</dbReference>
<dbReference type="UniPathway" id="UPA00070">
    <property type="reaction ID" value="UER00115"/>
</dbReference>
<dbReference type="Proteomes" id="UP000002402">
    <property type="component" value="Chromosome"/>
</dbReference>
<dbReference type="GO" id="GO:0005737">
    <property type="term" value="C:cytoplasm"/>
    <property type="evidence" value="ECO:0007669"/>
    <property type="project" value="TreeGrafter"/>
</dbReference>
<dbReference type="GO" id="GO:0005524">
    <property type="term" value="F:ATP binding"/>
    <property type="evidence" value="ECO:0007669"/>
    <property type="project" value="UniProtKB-UniRule"/>
</dbReference>
<dbReference type="GO" id="GO:0004087">
    <property type="term" value="F:carbamoyl-phosphate synthase (ammonia) activity"/>
    <property type="evidence" value="ECO:0007669"/>
    <property type="project" value="RHEA"/>
</dbReference>
<dbReference type="GO" id="GO:0004088">
    <property type="term" value="F:carbamoyl-phosphate synthase (glutamine-hydrolyzing) activity"/>
    <property type="evidence" value="ECO:0007669"/>
    <property type="project" value="UniProtKB-UniRule"/>
</dbReference>
<dbReference type="GO" id="GO:0046872">
    <property type="term" value="F:metal ion binding"/>
    <property type="evidence" value="ECO:0007669"/>
    <property type="project" value="UniProtKB-KW"/>
</dbReference>
<dbReference type="GO" id="GO:0044205">
    <property type="term" value="P:'de novo' UMP biosynthetic process"/>
    <property type="evidence" value="ECO:0007669"/>
    <property type="project" value="UniProtKB-UniRule"/>
</dbReference>
<dbReference type="GO" id="GO:0006541">
    <property type="term" value="P:glutamine metabolic process"/>
    <property type="evidence" value="ECO:0007669"/>
    <property type="project" value="TreeGrafter"/>
</dbReference>
<dbReference type="GO" id="GO:0006526">
    <property type="term" value="P:L-arginine biosynthetic process"/>
    <property type="evidence" value="ECO:0007669"/>
    <property type="project" value="UniProtKB-UniRule"/>
</dbReference>
<dbReference type="CDD" id="cd01424">
    <property type="entry name" value="MGS_CPS_II"/>
    <property type="match status" value="1"/>
</dbReference>
<dbReference type="FunFam" id="1.10.1030.10:FF:000002">
    <property type="entry name" value="Carbamoyl-phosphate synthase large chain"/>
    <property type="match status" value="1"/>
</dbReference>
<dbReference type="FunFam" id="3.30.1490.20:FF:000001">
    <property type="entry name" value="Carbamoyl-phosphate synthase large chain"/>
    <property type="match status" value="1"/>
</dbReference>
<dbReference type="FunFam" id="3.30.470.20:FF:000007">
    <property type="entry name" value="Carbamoyl-phosphate synthase large chain"/>
    <property type="match status" value="1"/>
</dbReference>
<dbReference type="FunFam" id="3.30.470.20:FF:000013">
    <property type="entry name" value="Carbamoyl-phosphate synthase large chain"/>
    <property type="match status" value="1"/>
</dbReference>
<dbReference type="FunFam" id="3.40.50.20:FF:000001">
    <property type="entry name" value="Carbamoyl-phosphate synthase large chain"/>
    <property type="match status" value="1"/>
</dbReference>
<dbReference type="FunFam" id="3.40.50.20:FF:000003">
    <property type="entry name" value="Carbamoyl-phosphate synthase large chain"/>
    <property type="match status" value="1"/>
</dbReference>
<dbReference type="Gene3D" id="3.40.50.20">
    <property type="match status" value="2"/>
</dbReference>
<dbReference type="Gene3D" id="3.30.1490.20">
    <property type="entry name" value="ATP-grasp fold, A domain"/>
    <property type="match status" value="1"/>
</dbReference>
<dbReference type="Gene3D" id="3.30.470.20">
    <property type="entry name" value="ATP-grasp fold, B domain"/>
    <property type="match status" value="2"/>
</dbReference>
<dbReference type="Gene3D" id="1.10.1030.10">
    <property type="entry name" value="Carbamoyl-phosphate synthetase, large subunit oligomerisation domain"/>
    <property type="match status" value="1"/>
</dbReference>
<dbReference type="Gene3D" id="3.40.50.1380">
    <property type="entry name" value="Methylglyoxal synthase-like domain"/>
    <property type="match status" value="1"/>
</dbReference>
<dbReference type="HAMAP" id="MF_01210_A">
    <property type="entry name" value="CPSase_L_chain_A"/>
    <property type="match status" value="1"/>
</dbReference>
<dbReference type="HAMAP" id="MF_01210_B">
    <property type="entry name" value="CPSase_L_chain_B"/>
    <property type="match status" value="1"/>
</dbReference>
<dbReference type="InterPro" id="IPR011761">
    <property type="entry name" value="ATP-grasp"/>
</dbReference>
<dbReference type="InterPro" id="IPR013815">
    <property type="entry name" value="ATP_grasp_subdomain_1"/>
</dbReference>
<dbReference type="InterPro" id="IPR006275">
    <property type="entry name" value="CarbamoylP_synth_lsu"/>
</dbReference>
<dbReference type="InterPro" id="IPR005480">
    <property type="entry name" value="CarbamoylP_synth_lsu_oligo"/>
</dbReference>
<dbReference type="InterPro" id="IPR036897">
    <property type="entry name" value="CarbamoylP_synth_lsu_oligo_sf"/>
</dbReference>
<dbReference type="InterPro" id="IPR005479">
    <property type="entry name" value="CbamoylP_synth_lsu-like_ATP-bd"/>
</dbReference>
<dbReference type="InterPro" id="IPR005483">
    <property type="entry name" value="CbamoylP_synth_lsu_CPSase_dom"/>
</dbReference>
<dbReference type="InterPro" id="IPR011607">
    <property type="entry name" value="MGS-like_dom"/>
</dbReference>
<dbReference type="InterPro" id="IPR036914">
    <property type="entry name" value="MGS-like_dom_sf"/>
</dbReference>
<dbReference type="InterPro" id="IPR033937">
    <property type="entry name" value="MGS_CPS_CarB"/>
</dbReference>
<dbReference type="InterPro" id="IPR016185">
    <property type="entry name" value="PreATP-grasp_dom_sf"/>
</dbReference>
<dbReference type="NCBIfam" id="TIGR01369">
    <property type="entry name" value="CPSaseII_lrg"/>
    <property type="match status" value="1"/>
</dbReference>
<dbReference type="NCBIfam" id="NF003671">
    <property type="entry name" value="PRK05294.1"/>
    <property type="match status" value="1"/>
</dbReference>
<dbReference type="NCBIfam" id="NF009455">
    <property type="entry name" value="PRK12815.1"/>
    <property type="match status" value="1"/>
</dbReference>
<dbReference type="PANTHER" id="PTHR11405:SF53">
    <property type="entry name" value="CARBAMOYL-PHOSPHATE SYNTHASE [AMMONIA], MITOCHONDRIAL"/>
    <property type="match status" value="1"/>
</dbReference>
<dbReference type="PANTHER" id="PTHR11405">
    <property type="entry name" value="CARBAMOYLTRANSFERASE FAMILY MEMBER"/>
    <property type="match status" value="1"/>
</dbReference>
<dbReference type="Pfam" id="PF02786">
    <property type="entry name" value="CPSase_L_D2"/>
    <property type="match status" value="2"/>
</dbReference>
<dbReference type="Pfam" id="PF02787">
    <property type="entry name" value="CPSase_L_D3"/>
    <property type="match status" value="1"/>
</dbReference>
<dbReference type="Pfam" id="PF02142">
    <property type="entry name" value="MGS"/>
    <property type="match status" value="1"/>
</dbReference>
<dbReference type="PRINTS" id="PR00098">
    <property type="entry name" value="CPSASE"/>
</dbReference>
<dbReference type="SMART" id="SM01096">
    <property type="entry name" value="CPSase_L_D3"/>
    <property type="match status" value="1"/>
</dbReference>
<dbReference type="SMART" id="SM00851">
    <property type="entry name" value="MGS"/>
    <property type="match status" value="1"/>
</dbReference>
<dbReference type="SUPFAM" id="SSF48108">
    <property type="entry name" value="Carbamoyl phosphate synthetase, large subunit connection domain"/>
    <property type="match status" value="1"/>
</dbReference>
<dbReference type="SUPFAM" id="SSF56059">
    <property type="entry name" value="Glutathione synthetase ATP-binding domain-like"/>
    <property type="match status" value="2"/>
</dbReference>
<dbReference type="SUPFAM" id="SSF52335">
    <property type="entry name" value="Methylglyoxal synthase-like"/>
    <property type="match status" value="1"/>
</dbReference>
<dbReference type="SUPFAM" id="SSF52440">
    <property type="entry name" value="PreATP-grasp domain"/>
    <property type="match status" value="2"/>
</dbReference>
<dbReference type="PROSITE" id="PS50975">
    <property type="entry name" value="ATP_GRASP"/>
    <property type="match status" value="2"/>
</dbReference>
<dbReference type="PROSITE" id="PS00866">
    <property type="entry name" value="CPSASE_1"/>
    <property type="match status" value="1"/>
</dbReference>
<dbReference type="PROSITE" id="PS00867">
    <property type="entry name" value="CPSASE_2"/>
    <property type="match status" value="2"/>
</dbReference>
<dbReference type="PROSITE" id="PS51855">
    <property type="entry name" value="MGS"/>
    <property type="match status" value="1"/>
</dbReference>
<proteinExistence type="inferred from homology"/>
<organism>
    <name type="scientific">Myxococcus xanthus (strain DK1622)</name>
    <dbReference type="NCBI Taxonomy" id="246197"/>
    <lineage>
        <taxon>Bacteria</taxon>
        <taxon>Pseudomonadati</taxon>
        <taxon>Myxococcota</taxon>
        <taxon>Myxococcia</taxon>
        <taxon>Myxococcales</taxon>
        <taxon>Cystobacterineae</taxon>
        <taxon>Myxococcaceae</taxon>
        <taxon>Myxococcus</taxon>
    </lineage>
</organism>
<name>CARB_MYXXD</name>
<evidence type="ECO:0000255" key="1">
    <source>
        <dbReference type="HAMAP-Rule" id="MF_01210"/>
    </source>
</evidence>
<keyword id="KW-0028">Amino-acid biosynthesis</keyword>
<keyword id="KW-0055">Arginine biosynthesis</keyword>
<keyword id="KW-0067">ATP-binding</keyword>
<keyword id="KW-0436">Ligase</keyword>
<keyword id="KW-0460">Magnesium</keyword>
<keyword id="KW-0464">Manganese</keyword>
<keyword id="KW-0479">Metal-binding</keyword>
<keyword id="KW-0547">Nucleotide-binding</keyword>
<keyword id="KW-0665">Pyrimidine biosynthesis</keyword>
<keyword id="KW-1185">Reference proteome</keyword>
<keyword id="KW-0677">Repeat</keyword>
<gene>
    <name evidence="1" type="primary">carB</name>
    <name type="ordered locus">MXAN_3388</name>
</gene>